<reference key="1">
    <citation type="journal article" date="2000" name="Genes Dev.">
        <title>Different human TFIIIB activities direct RNA polymerase III transcription from TATA-containing and TATA-less promoters.</title>
        <authorList>
            <person name="Schramm L."/>
            <person name="Pendergrast P.S."/>
            <person name="Sun Y."/>
            <person name="Hernandez N."/>
        </authorList>
    </citation>
    <scope>NUCLEOTIDE SEQUENCE [MRNA] (ISOFORMS 3 AND 4)</scope>
    <scope>FUNCTION</scope>
    <scope>VARIANTS GLU-38 AND MET-1347</scope>
</reference>
<reference key="2">
    <citation type="journal article" date="2000" name="Genomics">
        <title>The transcription factor-like nuclear regulator (TFNR) contains a novel 55-amino-acid motif repeated nine times and maps closely to SMN1.</title>
        <authorList>
            <person name="Kelter A.R."/>
            <person name="Herchenbach J."/>
            <person name="Wirth B."/>
        </authorList>
    </citation>
    <scope>NUCLEOTIDE SEQUENCE [MRNA] (ISOFORM 2)</scope>
    <scope>NUCLEOTIDE SEQUENCE [GENOMIC DNA] OF 1-2187 (ISOFORM 1)</scope>
    <scope>NUCLEOTIDE SEQUENCE [GENOMIC DNA] OF 2189-2624 (ISOFORM 2)</scope>
    <scope>SUBCELLULAR LOCATION</scope>
    <scope>TISSUE SPECIFICITY</scope>
    <scope>VARIANTS GLU-38; MET-1347 AND LEU-2013</scope>
</reference>
<reference key="3">
    <citation type="journal article" date="1999" name="DNA Res.">
        <title>Prediction of the coding sequences of unidentified human genes. XV. The complete sequences of 100 new cDNA clones from brain which code for large proteins in vitro.</title>
        <authorList>
            <person name="Nagase T."/>
            <person name="Ishikawa K."/>
            <person name="Kikuno R."/>
            <person name="Hirosawa M."/>
            <person name="Nomura N."/>
            <person name="Ohara O."/>
        </authorList>
    </citation>
    <scope>NUCLEOTIDE SEQUENCE [LARGE SCALE MRNA] (ISOFORM 5)</scope>
    <scope>VARIANTS CYS-757; MET-1264 AND MET-1347</scope>
    <source>
        <tissue>Brain</tissue>
    </source>
</reference>
<reference key="4">
    <citation type="journal article" date="2000" name="DNA Res.">
        <title>Prediction of the coding sequences of unidentified human genes. XIX. The complete sequences of 100 new cDNA clones from brain which code for large proteins in vitro.</title>
        <authorList>
            <person name="Nagase T."/>
            <person name="Kikuno R."/>
            <person name="Hattori A."/>
            <person name="Kondo Y."/>
            <person name="Okumura K."/>
            <person name="Ohara O."/>
        </authorList>
    </citation>
    <scope>NUCLEOTIDE SEQUENCE [LARGE SCALE MRNA] (ISOFORM 1)</scope>
    <scope>VARIANTS GLU-38; CYS-757; ILE-1244; MET-1264; MET-1347 AND GLU-1469</scope>
    <source>
        <tissue>Brain</tissue>
    </source>
</reference>
<reference key="5">
    <citation type="journal article" date="2002" name="DNA Res.">
        <title>Construction of expression-ready cDNA clones for KIAA genes: manual curation of 330 KIAA cDNA clones.</title>
        <authorList>
            <person name="Nakajima D."/>
            <person name="Okazaki N."/>
            <person name="Yamakawa H."/>
            <person name="Kikuno R."/>
            <person name="Ohara O."/>
            <person name="Nagase T."/>
        </authorList>
    </citation>
    <scope>SEQUENCE REVISION</scope>
</reference>
<reference key="6">
    <citation type="journal article" date="2007" name="BMC Genomics">
        <title>The full-ORF clone resource of the German cDNA consortium.</title>
        <authorList>
            <person name="Bechtel S."/>
            <person name="Rosenfelder H."/>
            <person name="Duda A."/>
            <person name="Schmidt C.P."/>
            <person name="Ernst U."/>
            <person name="Wellenreuther R."/>
            <person name="Mehrle A."/>
            <person name="Schuster C."/>
            <person name="Bahr A."/>
            <person name="Bloecker H."/>
            <person name="Heubner D."/>
            <person name="Hoerlein A."/>
            <person name="Michel G."/>
            <person name="Wedler H."/>
            <person name="Koehrer K."/>
            <person name="Ottenwaelder B."/>
            <person name="Poustka A."/>
            <person name="Wiemann S."/>
            <person name="Schupp I."/>
        </authorList>
    </citation>
    <scope>NUCLEOTIDE SEQUENCE [LARGE SCALE MRNA] (ISOFORM 8)</scope>
    <scope>NUCLEOTIDE SEQUENCE [LARGE SCALE MRNA] OF 1947-2624 (ISOFORM 7)</scope>
    <scope>VARIANT LEU-2013</scope>
    <source>
        <tissue>Testis</tissue>
    </source>
</reference>
<reference key="7">
    <citation type="journal article" date="2004" name="Nature">
        <title>The DNA sequence and comparative analysis of human chromosome 5.</title>
        <authorList>
            <person name="Schmutz J."/>
            <person name="Martin J."/>
            <person name="Terry A."/>
            <person name="Couronne O."/>
            <person name="Grimwood J."/>
            <person name="Lowry S."/>
            <person name="Gordon L.A."/>
            <person name="Scott D."/>
            <person name="Xie G."/>
            <person name="Huang W."/>
            <person name="Hellsten U."/>
            <person name="Tran-Gyamfi M."/>
            <person name="She X."/>
            <person name="Prabhakar S."/>
            <person name="Aerts A."/>
            <person name="Altherr M."/>
            <person name="Bajorek E."/>
            <person name="Black S."/>
            <person name="Branscomb E."/>
            <person name="Caoile C."/>
            <person name="Challacombe J.F."/>
            <person name="Chan Y.M."/>
            <person name="Denys M."/>
            <person name="Detter J.C."/>
            <person name="Escobar J."/>
            <person name="Flowers D."/>
            <person name="Fotopulos D."/>
            <person name="Glavina T."/>
            <person name="Gomez M."/>
            <person name="Gonzales E."/>
            <person name="Goodstein D."/>
            <person name="Grigoriev I."/>
            <person name="Groza M."/>
            <person name="Hammon N."/>
            <person name="Hawkins T."/>
            <person name="Haydu L."/>
            <person name="Israni S."/>
            <person name="Jett J."/>
            <person name="Kadner K."/>
            <person name="Kimball H."/>
            <person name="Kobayashi A."/>
            <person name="Lopez F."/>
            <person name="Lou Y."/>
            <person name="Martinez D."/>
            <person name="Medina C."/>
            <person name="Morgan J."/>
            <person name="Nandkeshwar R."/>
            <person name="Noonan J.P."/>
            <person name="Pitluck S."/>
            <person name="Pollard M."/>
            <person name="Predki P."/>
            <person name="Priest J."/>
            <person name="Ramirez L."/>
            <person name="Retterer J."/>
            <person name="Rodriguez A."/>
            <person name="Rogers S."/>
            <person name="Salamov A."/>
            <person name="Salazar A."/>
            <person name="Thayer N."/>
            <person name="Tice H."/>
            <person name="Tsai M."/>
            <person name="Ustaszewska A."/>
            <person name="Vo N."/>
            <person name="Wheeler J."/>
            <person name="Wu K."/>
            <person name="Yang J."/>
            <person name="Dickson M."/>
            <person name="Cheng J.-F."/>
            <person name="Eichler E.E."/>
            <person name="Olsen A."/>
            <person name="Pennacchio L.A."/>
            <person name="Rokhsar D.S."/>
            <person name="Richardson P."/>
            <person name="Lucas S.M."/>
            <person name="Myers R.M."/>
            <person name="Rubin E.M."/>
        </authorList>
    </citation>
    <scope>NUCLEOTIDE SEQUENCE [LARGE SCALE GENOMIC DNA]</scope>
</reference>
<reference key="8">
    <citation type="journal article" date="2004" name="Genome Res.">
        <title>The status, quality, and expansion of the NIH full-length cDNA project: the Mammalian Gene Collection (MGC).</title>
        <authorList>
            <consortium name="The MGC Project Team"/>
        </authorList>
    </citation>
    <scope>NUCLEOTIDE SEQUENCE [LARGE SCALE MRNA] (ISOFORM 1)</scope>
    <scope>VARIANTS GLU-38; CYS-757; ILE-1244; MET-1264; MET-1347 AND GLU-1469</scope>
    <source>
        <tissue>Lung</tissue>
    </source>
</reference>
<reference key="9">
    <citation type="submission" date="1999-08" db="EMBL/GenBank/DDBJ databases">
        <title>Molecular cloning and functional characterization of human TFIIIB 150.</title>
        <authorList>
            <person name="Teichmann M."/>
            <person name="Wang Z."/>
            <person name="Ito M."/>
            <person name="Seifart K.H."/>
            <person name="Roeder R.G."/>
        </authorList>
    </citation>
    <scope>NUCLEOTIDE SEQUENCE [MRNA] OF 1-881 (ISOFORM 1)</scope>
</reference>
<reference key="10">
    <citation type="journal article" date="2004" name="Nat. Genet.">
        <title>Complete sequencing and characterization of 21,243 full-length human cDNAs.</title>
        <authorList>
            <person name="Ota T."/>
            <person name="Suzuki Y."/>
            <person name="Nishikawa T."/>
            <person name="Otsuki T."/>
            <person name="Sugiyama T."/>
            <person name="Irie R."/>
            <person name="Wakamatsu A."/>
            <person name="Hayashi K."/>
            <person name="Sato H."/>
            <person name="Nagai K."/>
            <person name="Kimura K."/>
            <person name="Makita H."/>
            <person name="Sekine M."/>
            <person name="Obayashi M."/>
            <person name="Nishi T."/>
            <person name="Shibahara T."/>
            <person name="Tanaka T."/>
            <person name="Ishii S."/>
            <person name="Yamamoto J."/>
            <person name="Saito K."/>
            <person name="Kawai Y."/>
            <person name="Isono Y."/>
            <person name="Nakamura Y."/>
            <person name="Nagahari K."/>
            <person name="Murakami K."/>
            <person name="Yasuda T."/>
            <person name="Iwayanagi T."/>
            <person name="Wagatsuma M."/>
            <person name="Shiratori A."/>
            <person name="Sudo H."/>
            <person name="Hosoiri T."/>
            <person name="Kaku Y."/>
            <person name="Kodaira H."/>
            <person name="Kondo H."/>
            <person name="Sugawara M."/>
            <person name="Takahashi M."/>
            <person name="Kanda K."/>
            <person name="Yokoi T."/>
            <person name="Furuya T."/>
            <person name="Kikkawa E."/>
            <person name="Omura Y."/>
            <person name="Abe K."/>
            <person name="Kamihara K."/>
            <person name="Katsuta N."/>
            <person name="Sato K."/>
            <person name="Tanikawa M."/>
            <person name="Yamazaki M."/>
            <person name="Ninomiya K."/>
            <person name="Ishibashi T."/>
            <person name="Yamashita H."/>
            <person name="Murakawa K."/>
            <person name="Fujimori K."/>
            <person name="Tanai H."/>
            <person name="Kimata M."/>
            <person name="Watanabe M."/>
            <person name="Hiraoka S."/>
            <person name="Chiba Y."/>
            <person name="Ishida S."/>
            <person name="Ono Y."/>
            <person name="Takiguchi S."/>
            <person name="Watanabe S."/>
            <person name="Yosida M."/>
            <person name="Hotuta T."/>
            <person name="Kusano J."/>
            <person name="Kanehori K."/>
            <person name="Takahashi-Fujii A."/>
            <person name="Hara H."/>
            <person name="Tanase T.-O."/>
            <person name="Nomura Y."/>
            <person name="Togiya S."/>
            <person name="Komai F."/>
            <person name="Hara R."/>
            <person name="Takeuchi K."/>
            <person name="Arita M."/>
            <person name="Imose N."/>
            <person name="Musashino K."/>
            <person name="Yuuki H."/>
            <person name="Oshima A."/>
            <person name="Sasaki N."/>
            <person name="Aotsuka S."/>
            <person name="Yoshikawa Y."/>
            <person name="Matsunawa H."/>
            <person name="Ichihara T."/>
            <person name="Shiohata N."/>
            <person name="Sano S."/>
            <person name="Moriya S."/>
            <person name="Momiyama H."/>
            <person name="Satoh N."/>
            <person name="Takami S."/>
            <person name="Terashima Y."/>
            <person name="Suzuki O."/>
            <person name="Nakagawa S."/>
            <person name="Senoh A."/>
            <person name="Mizoguchi H."/>
            <person name="Goto Y."/>
            <person name="Shimizu F."/>
            <person name="Wakebe H."/>
            <person name="Hishigaki H."/>
            <person name="Watanabe T."/>
            <person name="Sugiyama A."/>
            <person name="Takemoto M."/>
            <person name="Kawakami B."/>
            <person name="Yamazaki M."/>
            <person name="Watanabe K."/>
            <person name="Kumagai A."/>
            <person name="Itakura S."/>
            <person name="Fukuzumi Y."/>
            <person name="Fujimori Y."/>
            <person name="Komiyama M."/>
            <person name="Tashiro H."/>
            <person name="Tanigami A."/>
            <person name="Fujiwara T."/>
            <person name="Ono T."/>
            <person name="Yamada K."/>
            <person name="Fujii Y."/>
            <person name="Ozaki K."/>
            <person name="Hirao M."/>
            <person name="Ohmori Y."/>
            <person name="Kawabata A."/>
            <person name="Hikiji T."/>
            <person name="Kobatake N."/>
            <person name="Inagaki H."/>
            <person name="Ikema Y."/>
            <person name="Okamoto S."/>
            <person name="Okitani R."/>
            <person name="Kawakami T."/>
            <person name="Noguchi S."/>
            <person name="Itoh T."/>
            <person name="Shigeta K."/>
            <person name="Senba T."/>
            <person name="Matsumura K."/>
            <person name="Nakajima Y."/>
            <person name="Mizuno T."/>
            <person name="Morinaga M."/>
            <person name="Sasaki M."/>
            <person name="Togashi T."/>
            <person name="Oyama M."/>
            <person name="Hata H."/>
            <person name="Watanabe M."/>
            <person name="Komatsu T."/>
            <person name="Mizushima-Sugano J."/>
            <person name="Satoh T."/>
            <person name="Shirai Y."/>
            <person name="Takahashi Y."/>
            <person name="Nakagawa K."/>
            <person name="Okumura K."/>
            <person name="Nagase T."/>
            <person name="Nomura N."/>
            <person name="Kikuchi H."/>
            <person name="Masuho Y."/>
            <person name="Yamashita R."/>
            <person name="Nakai K."/>
            <person name="Yada T."/>
            <person name="Nakamura Y."/>
            <person name="Ohara O."/>
            <person name="Isogai T."/>
            <person name="Sugano S."/>
        </authorList>
    </citation>
    <scope>NUCLEOTIDE SEQUENCE [LARGE SCALE MRNA] OF 1-655 (ISOFORM 6)</scope>
    <source>
        <tissue>Brain</tissue>
    </source>
</reference>
<reference key="11">
    <citation type="journal article" date="2000" name="Proc. Natl. Acad. Sci. U.S.A.">
        <title>A stable complex of a novel transcription factor IIB- related factor, human TFIIIB50, and associated proteins mediate selective transcription by RNA polymerase III of genes with upstream promoter elements.</title>
        <authorList>
            <person name="Teichmann M."/>
            <person name="Wang Z."/>
            <person name="Roeder R.G."/>
        </authorList>
    </citation>
    <scope>IDENTIFICATION OF TFIIIB-ALPHA COMPLEX</scope>
</reference>
<reference key="12">
    <citation type="journal article" date="2003" name="EMBO J.">
        <title>TFIIIB is phosphorylated, disrupted and selectively released from tRNA promoters during mitosis in vivo.</title>
        <authorList>
            <person name="Fairley J.A."/>
            <person name="Scott P.H."/>
            <person name="White R.J."/>
        </authorList>
    </citation>
    <scope>INTERACTION WITH BRF1</scope>
</reference>
<reference key="13">
    <citation type="journal article" date="2004" name="J. Biol. Chem.">
        <title>Transcription factor (TF)-like nuclear regulator, the 250-kDa form of Homo sapiens TFIIIB', is an essential component of human TFIIIC1 activity.</title>
        <authorList>
            <person name="Weser S."/>
            <person name="Gruber C."/>
            <person name="Hafner H.M."/>
            <person name="Teichmann M."/>
            <person name="Roeder R.G."/>
            <person name="Seifart K.H."/>
            <person name="Meissner W."/>
        </authorList>
    </citation>
    <scope>IDENTIFICATION OF TFIIIC1 COMPLEX</scope>
</reference>
<reference key="14">
    <citation type="journal article" date="2004" name="Mol. Cell">
        <title>CK2 phosphorylation of Bdp1 executes cell cycle-specific RNA polymerase III transcription repression.</title>
        <authorList>
            <person name="Hu P."/>
            <person name="Samudre K."/>
            <person name="Wu S."/>
            <person name="Sun Y."/>
            <person name="Hernandez N."/>
        </authorList>
    </citation>
    <scope>PHOSPHORYLATION</scope>
    <scope>MUTAGENESIS OF SER-390; SER-426; SER-431; THR-437 AND SER-446</scope>
</reference>
<reference key="15">
    <citation type="journal article" date="2006" name="Biol. Chem.">
        <title>The zinc finger protein ZNF297B interacts with BDP1, a subunit of TFIIIB.</title>
        <authorList>
            <person name="Schoenen F."/>
            <person name="Wirth B."/>
        </authorList>
    </citation>
    <scope>INTERACTION WITH ZBTB43</scope>
</reference>
<reference key="16">
    <citation type="journal article" date="2006" name="Gene">
        <title>A role for Yin Yang-1 (YY1) in the assembly of snRNA transcription complexes.</title>
        <authorList>
            <person name="Emran F."/>
            <person name="Florens L."/>
            <person name="Ma B."/>
            <person name="Swanson S.K."/>
            <person name="Washburn M.P."/>
            <person name="Hernandez N."/>
        </authorList>
    </citation>
    <scope>SUBUNIT</scope>
</reference>
<reference key="17">
    <citation type="journal article" date="2006" name="J. Biol. Chem.">
        <title>Epstein-Barr virus induces cellular transcription factors to allow active expression of EBER genes by RNA polymerase III.</title>
        <authorList>
            <person name="Felton-Edkins Z.A."/>
            <person name="Kondrashov A."/>
            <person name="Karali D."/>
            <person name="Fairley J.A."/>
            <person name="Dawson C.W."/>
            <person name="Arrand J.R."/>
            <person name="Young L.S."/>
            <person name="White R.J."/>
        </authorList>
    </citation>
    <scope>INDUCTION</scope>
</reference>
<reference key="18">
    <citation type="journal article" date="2008" name="Proc. Natl. Acad. Sci. U.S.A.">
        <title>A quantitative atlas of mitotic phosphorylation.</title>
        <authorList>
            <person name="Dephoure N."/>
            <person name="Zhou C."/>
            <person name="Villen J."/>
            <person name="Beausoleil S.A."/>
            <person name="Bakalarski C.E."/>
            <person name="Elledge S.J."/>
            <person name="Gygi S.P."/>
        </authorList>
    </citation>
    <scope>PHOSPHORYLATION [LARGE SCALE ANALYSIS] AT THR-915</scope>
    <scope>IDENTIFICATION BY MASS SPECTROMETRY [LARGE SCALE ANALYSIS]</scope>
    <source>
        <tissue>Cervix carcinoma</tissue>
    </source>
</reference>
<reference key="19">
    <citation type="journal article" date="2013" name="PLoS ONE">
        <title>Linkage study and exome sequencing identify a BDP1 mutation associated with hereditary hearing loss.</title>
        <authorList>
            <person name="Girotto G."/>
            <person name="Abdulhadi K."/>
            <person name="Buniello A."/>
            <person name="Vozzi D."/>
            <person name="Licastro D."/>
            <person name="d'Eustacchio A."/>
            <person name="Vuckovic D."/>
            <person name="Alkowari M.K."/>
            <person name="Steel K.P."/>
            <person name="Badii R."/>
            <person name="Gasparini P."/>
        </authorList>
    </citation>
    <scope>INVOLVEMENT IN DFNB112</scope>
</reference>
<evidence type="ECO:0000255" key="1"/>
<evidence type="ECO:0000256" key="2">
    <source>
        <dbReference type="SAM" id="MobiDB-lite"/>
    </source>
</evidence>
<evidence type="ECO:0000269" key="3">
    <source>
    </source>
</evidence>
<evidence type="ECO:0000269" key="4">
    <source>
    </source>
</evidence>
<evidence type="ECO:0000269" key="5">
    <source>
    </source>
</evidence>
<evidence type="ECO:0000269" key="6">
    <source>
    </source>
</evidence>
<evidence type="ECO:0000269" key="7">
    <source>
    </source>
</evidence>
<evidence type="ECO:0000269" key="8">
    <source>
    </source>
</evidence>
<evidence type="ECO:0000269" key="9">
    <source>
    </source>
</evidence>
<evidence type="ECO:0000269" key="10">
    <source>
    </source>
</evidence>
<evidence type="ECO:0000269" key="11">
    <source>
    </source>
</evidence>
<evidence type="ECO:0000269" key="12">
    <source>
    </source>
</evidence>
<evidence type="ECO:0000269" key="13">
    <source>
    </source>
</evidence>
<evidence type="ECO:0000269" key="14">
    <source>
    </source>
</evidence>
<evidence type="ECO:0000303" key="15">
    <source>
    </source>
</evidence>
<evidence type="ECO:0000303" key="16">
    <source>
    </source>
</evidence>
<evidence type="ECO:0000303" key="17">
    <source>
    </source>
</evidence>
<evidence type="ECO:0000303" key="18">
    <source>
    </source>
</evidence>
<evidence type="ECO:0000303" key="19">
    <source>
    </source>
</evidence>
<evidence type="ECO:0000305" key="20"/>
<evidence type="ECO:0007744" key="21">
    <source>
    </source>
</evidence>
<evidence type="ECO:0007829" key="22">
    <source>
        <dbReference type="PDB" id="5N9G"/>
    </source>
</evidence>
<comment type="function">
    <text evidence="4">General activator of RNA polymerase III transcription. Requires for transcription from all three types of polymerase III promoters. Requires for transcription of genes with internal promoter elements and with promoter elements upstream of the initiation site.</text>
</comment>
<comment type="subunit">
    <text evidence="7 10 11">Component of TFIIIB complex. The TFIIIB complex has two activities, alpha and beta. The TFIIIB-alpha and TFIIIB-beta activities are required for transcription of genes with TFIIIC-bound internal promoters and PSE transcription factor-bound external promoters, respectively. The TFIIIB-alpha activity complex is composed of TBP, BDP1, and a complex containing both BRF2 and at least four stably associated proteins; YY1 facilitates the formation of TFIIIB-alpha activity complex. The TFIIIB-beta activity complex is composed of TBP, BDP1, and BRF1. Interacts with BRF1; this interaction diminishes during mitosis resulting in the release of BDP1 from chromosomal templates. Component of TFIIIC complex. The TFIIIC complex has two activities, C1 and C2. The TFIIIC2 activity complex is only required for transcription of the 'classical' pol III genes whereas the TFIIIC1 activity complex is required for transcription of all pol III genes. The TFIIIC1 activity complex is composed at least of BDP1. Interacts with ZBTB43.</text>
</comment>
<comment type="subcellular location">
    <subcellularLocation>
        <location evidence="5">Nucleus</location>
    </subcellularLocation>
</comment>
<comment type="alternative products">
    <event type="alternative splicing"/>
    <isoform>
        <id>A6H8Y1-1</id>
        <name>1</name>
        <sequence type="displayed"/>
    </isoform>
    <isoform>
        <id>A6H8Y1-2</id>
        <name>2</name>
        <sequence type="described" ref="VSP_033577 VSP_033578"/>
    </isoform>
    <isoform>
        <id>A6H8Y1-3</id>
        <name>3</name>
        <sequence type="described" ref="VSP_033570 VSP_033574"/>
    </isoform>
    <isoform>
        <id>A6H8Y1-4</id>
        <name>4</name>
        <sequence type="described" ref="VSP_033572 VSP_033573"/>
    </isoform>
    <isoform>
        <id>A6H8Y1-5</id>
        <name>5</name>
        <sequence type="described" ref="VSP_033568 VSP_033571 VSP_033574"/>
    </isoform>
    <isoform>
        <id>A6H8Y1-6</id>
        <name>6</name>
        <sequence type="described" ref="VSP_033569"/>
    </isoform>
    <isoform>
        <id>A6H8Y1-7</id>
        <name>7</name>
        <sequence type="described" ref="VSP_033575 VSP_033581 VSP_033582"/>
    </isoform>
    <isoform>
        <id>A6H8Y1-8</id>
        <name>8</name>
        <sequence type="described" ref="VSP_033567 VSP_033576 VSP_033579 VSP_033580"/>
    </isoform>
</comment>
<comment type="tissue specificity">
    <text evidence="5">Isoform 2 is highly expressed in cerebellum.</text>
</comment>
<comment type="induction">
    <text evidence="12">By Epstein-Barr virus (EBV) resulting in the stimulation of the EBV EBER genes.</text>
</comment>
<comment type="PTM">
    <text evidence="8">Phosphorylated by CSNK2A1 during mitosis, resulting in its release from chromatin and suppression of polymerase III transcription.</text>
</comment>
<comment type="disease" evidence="14">
    <disease id="DI-05438">
        <name>Deafness, autosomal recessive, 112</name>
        <acronym>DFNB112</acronym>
        <description>A form of non-syndromic, sensorineural deafness characterized by postlingual progressive hearing impairment. Sensorineural deafness results from damage to the neural receptors of the inner ear, the nerve pathways to the brain, or the area of the brain that receives sound information.</description>
        <dbReference type="MIM" id="618257"/>
    </disease>
    <text>The disease may be caused by variants affecting the gene represented in this entry.</text>
</comment>
<comment type="sequence caution" evidence="20">
    <conflict type="frameshift">
        <sequence resource="EMBL-CDS" id="AAG09268"/>
    </conflict>
</comment>
<comment type="sequence caution" evidence="20">
    <conflict type="miscellaneous discrepancy">
        <sequence resource="EMBL-CDS" id="AAH32146"/>
    </conflict>
    <text>Contaminating sequence. Potential poly-A sequence.</text>
</comment>
<comment type="sequence caution" evidence="20">
    <conflict type="erroneous initiation">
        <sequence resource="EMBL-CDS" id="BAA86555"/>
    </conflict>
    <text>Extended N-terminus.</text>
</comment>
<comment type="sequence caution" evidence="20">
    <conflict type="erroneous initiation">
        <sequence resource="EMBL-CDS" id="BAB21780"/>
    </conflict>
    <text>Extended N-terminus.</text>
</comment>
<comment type="sequence caution" evidence="20">
    <conflict type="erroneous initiation">
        <sequence resource="EMBL-CDS" id="CAH18085"/>
    </conflict>
    <text>Truncated N-terminus.</text>
</comment>
<accession>A6H8Y1</accession>
<accession>Q68DS6</accession>
<accession>Q68DY5</accession>
<accession>Q6MZL9</accession>
<accession>Q6PIM7</accession>
<accession>Q86W98</accession>
<accession>Q96LR8</accession>
<accession>Q9C0H4</accession>
<accession>Q9H197</accession>
<accession>Q9H1A1</accession>
<accession>Q9HAW1</accession>
<accession>Q9HAW2</accession>
<accession>Q9HCY0</accession>
<accession>Q9ULH9</accession>
<feature type="chain" id="PRO_0000333863" description="Transcription factor TFIIIB component B'' homolog">
    <location>
        <begin position="1"/>
        <end position="2624"/>
    </location>
</feature>
<feature type="domain" description="Myb-like">
    <location>
        <begin position="295"/>
        <end position="345"/>
    </location>
</feature>
<feature type="repeat" description="1; approximate">
    <location>
        <begin position="823"/>
        <end position="877"/>
    </location>
</feature>
<feature type="repeat" description="2">
    <location>
        <begin position="878"/>
        <end position="932"/>
    </location>
</feature>
<feature type="repeat" description="3">
    <location>
        <begin position="933"/>
        <end position="987"/>
    </location>
</feature>
<feature type="repeat" description="4">
    <location>
        <begin position="988"/>
        <end position="1040"/>
    </location>
</feature>
<feature type="repeat" description="5">
    <location>
        <begin position="1041"/>
        <end position="1094"/>
    </location>
</feature>
<feature type="repeat" description="6">
    <location>
        <begin position="1095"/>
        <end position="1148"/>
    </location>
</feature>
<feature type="repeat" description="7">
    <location>
        <begin position="1149"/>
        <end position="1203"/>
    </location>
</feature>
<feature type="repeat" description="8; approximate">
    <location>
        <begin position="1204"/>
        <end position="1257"/>
    </location>
</feature>
<feature type="repeat" description="9; approximate">
    <location>
        <begin position="1258"/>
        <end position="1327"/>
    </location>
</feature>
<feature type="region of interest" description="Interaction with ZBTB43" evidence="10">
    <location>
        <begin position="1"/>
        <end position="299"/>
    </location>
</feature>
<feature type="region of interest" description="Disordered" evidence="2">
    <location>
        <begin position="1"/>
        <end position="142"/>
    </location>
</feature>
<feature type="region of interest" description="Disordered" evidence="2">
    <location>
        <begin position="193"/>
        <end position="241"/>
    </location>
</feature>
<feature type="region of interest" description="Required for phosphorylation by CSNK2A1">
    <location>
        <begin position="355"/>
        <end position="470"/>
    </location>
</feature>
<feature type="region of interest" description="Disordered" evidence="2">
    <location>
        <begin position="379"/>
        <end position="449"/>
    </location>
</feature>
<feature type="region of interest" description="Disordered" evidence="2">
    <location>
        <begin position="544"/>
        <end position="567"/>
    </location>
</feature>
<feature type="region of interest" description="Disordered" evidence="2">
    <location>
        <begin position="606"/>
        <end position="663"/>
    </location>
</feature>
<feature type="region of interest" description="Disordered" evidence="2">
    <location>
        <begin position="729"/>
        <end position="759"/>
    </location>
</feature>
<feature type="region of interest" description="9 X 55 AA repeats of G-R-R-X-I-S-P-X-E-N-G-X-E-E-V-K-P-X-X-E-M-E-T-D-L-K-X-T-G-R-E-X-X-X-R-E-K-T-X-E-X-X-D-A-X-E-E-I-D-X-D-L-E-E-T">
    <location>
        <begin position="823"/>
        <end position="1327"/>
    </location>
</feature>
<feature type="region of interest" description="Disordered" evidence="2">
    <location>
        <begin position="930"/>
        <end position="1222"/>
    </location>
</feature>
<feature type="region of interest" description="Disordered" evidence="2">
    <location>
        <begin position="1306"/>
        <end position="1348"/>
    </location>
</feature>
<feature type="region of interest" description="Disordered" evidence="2">
    <location>
        <begin position="1365"/>
        <end position="1440"/>
    </location>
</feature>
<feature type="region of interest" description="Disordered" evidence="2">
    <location>
        <begin position="1519"/>
        <end position="1543"/>
    </location>
</feature>
<feature type="region of interest" description="Disordered" evidence="2">
    <location>
        <begin position="1684"/>
        <end position="1722"/>
    </location>
</feature>
<feature type="region of interest" description="Disordered" evidence="2">
    <location>
        <begin position="1819"/>
        <end position="1863"/>
    </location>
</feature>
<feature type="region of interest" description="Disordered" evidence="2">
    <location>
        <begin position="2130"/>
        <end position="2164"/>
    </location>
</feature>
<feature type="region of interest" description="Disordered" evidence="2">
    <location>
        <begin position="2181"/>
        <end position="2200"/>
    </location>
</feature>
<feature type="region of interest" description="Disordered" evidence="2">
    <location>
        <begin position="2207"/>
        <end position="2241"/>
    </location>
</feature>
<feature type="region of interest" description="Disordered" evidence="2">
    <location>
        <begin position="2444"/>
        <end position="2501"/>
    </location>
</feature>
<feature type="region of interest" description="Disordered" evidence="2">
    <location>
        <begin position="2519"/>
        <end position="2566"/>
    </location>
</feature>
<feature type="coiled-coil region" evidence="1">
    <location>
        <begin position="144"/>
        <end position="177"/>
    </location>
</feature>
<feature type="coiled-coil region" evidence="1">
    <location>
        <begin position="1078"/>
        <end position="1103"/>
    </location>
</feature>
<feature type="coiled-coil region" evidence="1">
    <location>
        <begin position="1223"/>
        <end position="1284"/>
    </location>
</feature>
<feature type="compositionally biased region" description="Basic and acidic residues" evidence="2">
    <location>
        <begin position="63"/>
        <end position="77"/>
    </location>
</feature>
<feature type="compositionally biased region" description="Low complexity" evidence="2">
    <location>
        <begin position="99"/>
        <end position="119"/>
    </location>
</feature>
<feature type="compositionally biased region" description="Polar residues" evidence="2">
    <location>
        <begin position="120"/>
        <end position="132"/>
    </location>
</feature>
<feature type="compositionally biased region" description="Basic and acidic residues" evidence="2">
    <location>
        <begin position="133"/>
        <end position="142"/>
    </location>
</feature>
<feature type="compositionally biased region" description="Polar residues" evidence="2">
    <location>
        <begin position="212"/>
        <end position="229"/>
    </location>
</feature>
<feature type="compositionally biased region" description="Acidic residues" evidence="2">
    <location>
        <begin position="230"/>
        <end position="240"/>
    </location>
</feature>
<feature type="compositionally biased region" description="Basic residues" evidence="2">
    <location>
        <begin position="397"/>
        <end position="407"/>
    </location>
</feature>
<feature type="compositionally biased region" description="Low complexity" evidence="2">
    <location>
        <begin position="552"/>
        <end position="565"/>
    </location>
</feature>
<feature type="compositionally biased region" description="Basic and acidic residues" evidence="2">
    <location>
        <begin position="637"/>
        <end position="663"/>
    </location>
</feature>
<feature type="compositionally biased region" description="Basic and acidic residues" evidence="2">
    <location>
        <begin position="736"/>
        <end position="759"/>
    </location>
</feature>
<feature type="compositionally biased region" description="Basic and acidic residues" evidence="2">
    <location>
        <begin position="930"/>
        <end position="957"/>
    </location>
</feature>
<feature type="compositionally biased region" description="Basic and acidic residues" evidence="2">
    <location>
        <begin position="979"/>
        <end position="1006"/>
    </location>
</feature>
<feature type="compositionally biased region" description="Acidic residues" evidence="2">
    <location>
        <begin position="1030"/>
        <end position="1041"/>
    </location>
</feature>
<feature type="compositionally biased region" description="Basic and acidic residues" evidence="2">
    <location>
        <begin position="1052"/>
        <end position="1079"/>
    </location>
</feature>
<feature type="compositionally biased region" description="Acidic residues" evidence="2">
    <location>
        <begin position="1082"/>
        <end position="1095"/>
    </location>
</feature>
<feature type="compositionally biased region" description="Basic and acidic residues" evidence="2">
    <location>
        <begin position="1120"/>
        <end position="1133"/>
    </location>
</feature>
<feature type="compositionally biased region" description="Acidic residues" evidence="2">
    <location>
        <begin position="1136"/>
        <end position="1145"/>
    </location>
</feature>
<feature type="compositionally biased region" description="Basic and acidic residues" evidence="2">
    <location>
        <begin position="1161"/>
        <end position="1190"/>
    </location>
</feature>
<feature type="compositionally biased region" description="Acidic residues" evidence="2">
    <location>
        <begin position="1194"/>
        <end position="1204"/>
    </location>
</feature>
<feature type="compositionally biased region" description="Basic and acidic residues" evidence="2">
    <location>
        <begin position="1306"/>
        <end position="1321"/>
    </location>
</feature>
<feature type="compositionally biased region" description="Polar residues" evidence="2">
    <location>
        <begin position="1326"/>
        <end position="1344"/>
    </location>
</feature>
<feature type="compositionally biased region" description="Basic and acidic residues" evidence="2">
    <location>
        <begin position="1366"/>
        <end position="1378"/>
    </location>
</feature>
<feature type="compositionally biased region" description="Polar residues" evidence="2">
    <location>
        <begin position="1379"/>
        <end position="1390"/>
    </location>
</feature>
<feature type="compositionally biased region" description="Polar residues" evidence="2">
    <location>
        <begin position="1411"/>
        <end position="1421"/>
    </location>
</feature>
<feature type="compositionally biased region" description="Polar residues" evidence="2">
    <location>
        <begin position="1519"/>
        <end position="1529"/>
    </location>
</feature>
<feature type="compositionally biased region" description="Basic and acidic residues" evidence="2">
    <location>
        <begin position="1695"/>
        <end position="1719"/>
    </location>
</feature>
<feature type="compositionally biased region" description="Basic residues" evidence="2">
    <location>
        <begin position="1844"/>
        <end position="1853"/>
    </location>
</feature>
<feature type="compositionally biased region" description="Basic and acidic residues" evidence="2">
    <location>
        <begin position="2131"/>
        <end position="2151"/>
    </location>
</feature>
<feature type="compositionally biased region" description="Basic and acidic residues" evidence="2">
    <location>
        <begin position="2470"/>
        <end position="2479"/>
    </location>
</feature>
<feature type="compositionally biased region" description="Low complexity" evidence="2">
    <location>
        <begin position="2488"/>
        <end position="2498"/>
    </location>
</feature>
<feature type="compositionally biased region" description="Basic residues" evidence="2">
    <location>
        <begin position="2526"/>
        <end position="2544"/>
    </location>
</feature>
<feature type="modified residue" description="Phosphothreonine" evidence="21">
    <location>
        <position position="915"/>
    </location>
</feature>
<feature type="splice variant" id="VSP_033567" description="In isoform 8." evidence="19">
    <location>
        <begin position="1"/>
        <end position="1863"/>
    </location>
</feature>
<feature type="splice variant" id="VSP_033568" description="In isoform 5." evidence="15">
    <location>
        <begin position="1"/>
        <end position="610"/>
    </location>
</feature>
<feature type="splice variant" id="VSP_033569" description="In isoform 6." evidence="18">
    <location>
        <begin position="24"/>
        <end position="43"/>
    </location>
</feature>
<feature type="splice variant" id="VSP_033570" description="In isoform 3." evidence="16">
    <original>NISSEVLSMMHTPVEEKRNSEKEVSSHFSHFKISS</original>
    <variation>VCIFLSFKSFLNAFSEEINNSMIILSLSPTTLKNL</variation>
    <location>
        <begin position="1354"/>
        <end position="1388"/>
    </location>
</feature>
<feature type="splice variant" id="VSP_033571" description="In isoform 5." evidence="15">
    <original>NISSEVLSMMHTPVEEKRNSEKEVSSHFSHFKISS</original>
    <variation>VCIFLSFKSFLNAFSEEINNSMIILSLSPTTFKNL</variation>
    <location>
        <begin position="1354"/>
        <end position="1388"/>
    </location>
</feature>
<feature type="splice variant" id="VSP_033572" description="In isoform 4." evidence="16">
    <original>NISSEVLSMMHTPVEEKRN</original>
    <variation>VCIFLSFKSFLNAFFRGNK</variation>
    <location>
        <begin position="1354"/>
        <end position="1372"/>
    </location>
</feature>
<feature type="splice variant" id="VSP_033573" description="In isoform 4." evidence="16">
    <location>
        <begin position="1373"/>
        <end position="2624"/>
    </location>
</feature>
<feature type="splice variant" id="VSP_033574" description="In isoform 3 and isoform 5." evidence="15 16">
    <location>
        <begin position="1389"/>
        <end position="2624"/>
    </location>
</feature>
<feature type="splice variant" id="VSP_033575" description="In isoform 7." evidence="19">
    <location>
        <begin position="1977"/>
        <end position="2008"/>
    </location>
</feature>
<feature type="splice variant" id="VSP_033576" description="In isoform 8." evidence="19">
    <location>
        <position position="2008"/>
    </location>
</feature>
<feature type="splice variant" id="VSP_033577" description="In isoform 2." evidence="17">
    <original>YTPTSI</original>
    <variation>VKECTV</variation>
    <location>
        <begin position="2249"/>
        <end position="2254"/>
    </location>
</feature>
<feature type="splice variant" id="VSP_033578" description="In isoform 2." evidence="17">
    <location>
        <begin position="2255"/>
        <end position="2624"/>
    </location>
</feature>
<feature type="splice variant" id="VSP_033579" description="In isoform 8." evidence="19">
    <original>NLVANVPQDGEDEQAFILTLVEIPANAVEEFTDATAQFMPNPLLPAPILVKSVNTEE</original>
    <variation>FVYQQLQLVKMPWVYLFLEEIILKSRLIIWILYLGRDFNAGLIKMTTFLLPKNVHSL</variation>
    <location>
        <begin position="2271"/>
        <end position="2327"/>
    </location>
</feature>
<feature type="splice variant" id="VSP_033580" description="In isoform 8." evidence="19">
    <location>
        <begin position="2328"/>
        <end position="2624"/>
    </location>
</feature>
<feature type="splice variant" id="VSP_033581" description="In isoform 7." evidence="19">
    <original>VSC</original>
    <variation>RPF</variation>
    <location>
        <begin position="2582"/>
        <end position="2584"/>
    </location>
</feature>
<feature type="splice variant" id="VSP_033582" description="In isoform 7." evidence="19">
    <location>
        <begin position="2585"/>
        <end position="2624"/>
    </location>
</feature>
<feature type="sequence variant" id="VAR_056743" description="In dbSNP:rs3748042.">
    <original>N</original>
    <variation>S</variation>
    <location>
        <position position="26"/>
    </location>
</feature>
<feature type="sequence variant" id="VAR_043312" description="In dbSNP:rs3748043." evidence="4 5 6 9">
    <original>D</original>
    <variation>E</variation>
    <location>
        <position position="38"/>
    </location>
</feature>
<feature type="sequence variant" id="VAR_056744" description="In dbSNP:rs9687593.">
    <original>A</original>
    <variation>V</variation>
    <location>
        <position position="125"/>
    </location>
</feature>
<feature type="sequence variant" id="VAR_056745" description="In dbSNP:rs36009281.">
    <original>K</original>
    <variation>E</variation>
    <location>
        <position position="722"/>
    </location>
</feature>
<feature type="sequence variant" id="VAR_043313" description="In dbSNP:rs3761966." evidence="3 6 9">
    <original>R</original>
    <variation>C</variation>
    <location>
        <position position="757"/>
    </location>
</feature>
<feature type="sequence variant" id="VAR_043314" description="In dbSNP:rs3761967.">
    <original>V</original>
    <variation>M</variation>
    <location>
        <position position="778"/>
    </location>
</feature>
<feature type="sequence variant" id="VAR_056746" description="In dbSNP:rs715748.">
    <original>G</original>
    <variation>S</variation>
    <location>
        <position position="1180"/>
    </location>
</feature>
<feature type="sequence variant" id="VAR_056747" description="In dbSNP:rs1961760." evidence="6 9">
    <original>F</original>
    <variation>I</variation>
    <location>
        <position position="1244"/>
    </location>
</feature>
<feature type="sequence variant" id="VAR_043315" description="In dbSNP:rs715747." evidence="3 6 9">
    <original>I</original>
    <variation>M</variation>
    <location>
        <position position="1264"/>
    </location>
</feature>
<feature type="sequence variant" id="VAR_043316" description="In dbSNP:rs6886336." evidence="3 4 5 6 9">
    <original>V</original>
    <variation>M</variation>
    <location>
        <position position="1347"/>
    </location>
</feature>
<feature type="sequence variant" id="VAR_043317" description="In dbSNP:rs1698063." evidence="6 9">
    <original>K</original>
    <variation>E</variation>
    <location>
        <position position="1469"/>
    </location>
</feature>
<feature type="sequence variant" id="VAR_056748" description="In dbSNP:rs12187098.">
    <original>Q</original>
    <variation>E</variation>
    <location>
        <position position="1676"/>
    </location>
</feature>
<feature type="sequence variant" id="VAR_043318" description="In dbSNP:rs6453014." evidence="5 13">
    <original>I</original>
    <variation>L</variation>
    <location>
        <position position="2013"/>
    </location>
</feature>
<feature type="sequence variant" id="VAR_056749" description="In dbSNP:rs17276250.">
    <original>N</original>
    <variation>S</variation>
    <location>
        <position position="2555"/>
    </location>
</feature>
<feature type="mutagenesis site" description="Not phosphorylated by CSNK2A1; when associated with A-426; A-431; A-437 and A-446. CK2 treatment constitutively activates for U6 transcription; when associated with A-426; A-431; A-437 and A-446." evidence="8">
    <original>S</original>
    <variation>A</variation>
    <location>
        <position position="390"/>
    </location>
</feature>
<feature type="mutagenesis site" description="Not phosphorylated by CSNK2A1; when associated with A-390; A-431; A-437 and A-446. CK2 treatment constitutively activates for U6 transcription; when associated with A-390; A-431; A-437 and A-446." evidence="8">
    <original>S</original>
    <variation>A</variation>
    <location>
        <position position="426"/>
    </location>
</feature>
<feature type="mutagenesis site" description="Not phosphorylated by CSNK2A1; when associated with A-390; A-426; A-437 and A-446. CK2 treatment constitutively activates for U6 transcription; when associated with A-390; A-426; A-437 and A-446." evidence="8">
    <original>S</original>
    <variation>A</variation>
    <location>
        <position position="431"/>
    </location>
</feature>
<feature type="mutagenesis site" description="Not phosphorylated by CSNK2A1; when associated with A-390; A-426; A-431 and A-446. CK2 treatment constitutively activates for U6 transcription; when associated with A-390; A-426; A-431 and A-446." evidence="8">
    <original>T</original>
    <variation>A</variation>
    <location>
        <position position="437"/>
    </location>
</feature>
<feature type="mutagenesis site" description="Not phosphorylated by CSNK2A1; when associated with A-390; A-426; A-431 and A-437. CK2 treatment constitutively activates for U6 transcription; when associated with A-390; A-426; A-431 and A-437." evidence="8">
    <original>S</original>
    <variation>A</variation>
    <location>
        <position position="446"/>
    </location>
</feature>
<feature type="sequence conflict" description="In Ref. 9; AAG09268." evidence="20" ref="9">
    <original>S</original>
    <variation>N</variation>
    <location>
        <position position="8"/>
    </location>
</feature>
<feature type="sequence conflict" description="In Ref. 1; AAG30221/AAG30220." evidence="20" ref="1">
    <original>E</original>
    <variation>G</variation>
    <location>
        <position position="233"/>
    </location>
</feature>
<feature type="sequence conflict" description="In Ref. 10; BAB71602." evidence="20" ref="10">
    <original>R</original>
    <variation>K</variation>
    <location>
        <position position="575"/>
    </location>
</feature>
<feature type="sequence conflict" description="In Ref. 2; CAC21448." evidence="20" ref="2">
    <original>V</original>
    <variation>D</variation>
    <location>
        <position position="683"/>
    </location>
</feature>
<feature type="sequence conflict" description="In Ref. 9; AAG09268." evidence="20" ref="9">
    <original>A</original>
    <variation>T</variation>
    <location>
        <position position="881"/>
    </location>
</feature>
<feature type="sequence conflict" description="In Ref. 2; CAC21448/CAC04245." evidence="20" ref="2">
    <original>V</original>
    <variation>G</variation>
    <location>
        <position position="973"/>
    </location>
</feature>
<feature type="sequence conflict" description="In Ref. 1; AAG30221/AAG30220." evidence="20" ref="1">
    <original>E</original>
    <variation>G</variation>
    <location>
        <position position="1009"/>
    </location>
</feature>
<feature type="sequence conflict" description="In Ref. 6; CAE46010." evidence="20" ref="6">
    <original>T</original>
    <variation>A</variation>
    <location>
        <position position="2580"/>
    </location>
</feature>
<feature type="helix" evidence="22">
    <location>
        <begin position="305"/>
        <end position="317"/>
    </location>
</feature>
<feature type="helix" evidence="22">
    <location>
        <begin position="322"/>
        <end position="328"/>
    </location>
</feature>
<feature type="helix" evidence="22">
    <location>
        <begin position="334"/>
        <end position="347"/>
    </location>
</feature>
<feature type="helix" evidence="22">
    <location>
        <begin position="349"/>
        <end position="357"/>
    </location>
</feature>
<feature type="helix" evidence="22">
    <location>
        <begin position="364"/>
        <end position="381"/>
    </location>
</feature>
<organism>
    <name type="scientific">Homo sapiens</name>
    <name type="common">Human</name>
    <dbReference type="NCBI Taxonomy" id="9606"/>
    <lineage>
        <taxon>Eukaryota</taxon>
        <taxon>Metazoa</taxon>
        <taxon>Chordata</taxon>
        <taxon>Craniata</taxon>
        <taxon>Vertebrata</taxon>
        <taxon>Euteleostomi</taxon>
        <taxon>Mammalia</taxon>
        <taxon>Eutheria</taxon>
        <taxon>Euarchontoglires</taxon>
        <taxon>Primates</taxon>
        <taxon>Haplorrhini</taxon>
        <taxon>Catarrhini</taxon>
        <taxon>Hominidae</taxon>
        <taxon>Homo</taxon>
    </lineage>
</organism>
<dbReference type="EMBL" id="AF298151">
    <property type="protein sequence ID" value="AAG30220.1"/>
    <property type="molecule type" value="mRNA"/>
</dbReference>
<dbReference type="EMBL" id="AF298152">
    <property type="protein sequence ID" value="AAG30221.1"/>
    <property type="molecule type" value="mRNA"/>
</dbReference>
<dbReference type="EMBL" id="AJ238520">
    <property type="protein sequence ID" value="CAC04245.1"/>
    <property type="molecule type" value="mRNA"/>
</dbReference>
<dbReference type="EMBL" id="AJ278892">
    <property type="protein sequence ID" value="CAC17771.1"/>
    <property type="molecule type" value="Genomic_DNA"/>
</dbReference>
<dbReference type="EMBL" id="AJ279120">
    <property type="protein sequence ID" value="CAC21448.1"/>
    <property type="molecule type" value="Genomic_DNA"/>
</dbReference>
<dbReference type="EMBL" id="AJ279121">
    <property type="protein sequence ID" value="CAC21448.1"/>
    <property type="status" value="JOINED"/>
    <property type="molecule type" value="Genomic_DNA"/>
</dbReference>
<dbReference type="EMBL" id="AJ279122">
    <property type="protein sequence ID" value="CAC21448.1"/>
    <property type="status" value="JOINED"/>
    <property type="molecule type" value="Genomic_DNA"/>
</dbReference>
<dbReference type="EMBL" id="AJ279123">
    <property type="protein sequence ID" value="CAC21448.1"/>
    <property type="status" value="JOINED"/>
    <property type="molecule type" value="Genomic_DNA"/>
</dbReference>
<dbReference type="EMBL" id="AJ279124">
    <property type="protein sequence ID" value="CAC21448.1"/>
    <property type="status" value="JOINED"/>
    <property type="molecule type" value="Genomic_DNA"/>
</dbReference>
<dbReference type="EMBL" id="AJ279125">
    <property type="protein sequence ID" value="CAC21448.1"/>
    <property type="status" value="JOINED"/>
    <property type="molecule type" value="Genomic_DNA"/>
</dbReference>
<dbReference type="EMBL" id="AJ279126">
    <property type="protein sequence ID" value="CAC21448.1"/>
    <property type="status" value="JOINED"/>
    <property type="molecule type" value="Genomic_DNA"/>
</dbReference>
<dbReference type="EMBL" id="AJ279127">
    <property type="protein sequence ID" value="CAC21448.1"/>
    <property type="status" value="JOINED"/>
    <property type="molecule type" value="Genomic_DNA"/>
</dbReference>
<dbReference type="EMBL" id="AJ279128">
    <property type="protein sequence ID" value="CAC21448.1"/>
    <property type="status" value="JOINED"/>
    <property type="molecule type" value="Genomic_DNA"/>
</dbReference>
<dbReference type="EMBL" id="AJ279129">
    <property type="protein sequence ID" value="CAC21448.1"/>
    <property type="status" value="JOINED"/>
    <property type="molecule type" value="Genomic_DNA"/>
</dbReference>
<dbReference type="EMBL" id="AJ279130">
    <property type="protein sequence ID" value="CAC21448.1"/>
    <property type="status" value="JOINED"/>
    <property type="molecule type" value="Genomic_DNA"/>
</dbReference>
<dbReference type="EMBL" id="AJ279131">
    <property type="protein sequence ID" value="CAC21448.1"/>
    <property type="status" value="JOINED"/>
    <property type="molecule type" value="Genomic_DNA"/>
</dbReference>
<dbReference type="EMBL" id="AJ279132">
    <property type="protein sequence ID" value="CAC21448.1"/>
    <property type="status" value="JOINED"/>
    <property type="molecule type" value="Genomic_DNA"/>
</dbReference>
<dbReference type="EMBL" id="AJ279133">
    <property type="protein sequence ID" value="CAC21448.1"/>
    <property type="status" value="JOINED"/>
    <property type="molecule type" value="Genomic_DNA"/>
</dbReference>
<dbReference type="EMBL" id="AJ279134">
    <property type="protein sequence ID" value="CAC21448.1"/>
    <property type="status" value="JOINED"/>
    <property type="molecule type" value="Genomic_DNA"/>
</dbReference>
<dbReference type="EMBL" id="AJ279135">
    <property type="protein sequence ID" value="CAC21448.1"/>
    <property type="status" value="JOINED"/>
    <property type="molecule type" value="Genomic_DNA"/>
</dbReference>
<dbReference type="EMBL" id="AJ279136">
    <property type="protein sequence ID" value="CAC21448.1"/>
    <property type="status" value="JOINED"/>
    <property type="molecule type" value="Genomic_DNA"/>
</dbReference>
<dbReference type="EMBL" id="AJ279137">
    <property type="protein sequence ID" value="CAC21448.1"/>
    <property type="status" value="JOINED"/>
    <property type="molecule type" value="Genomic_DNA"/>
</dbReference>
<dbReference type="EMBL" id="AJ279138">
    <property type="protein sequence ID" value="CAC21448.1"/>
    <property type="status" value="JOINED"/>
    <property type="molecule type" value="Genomic_DNA"/>
</dbReference>
<dbReference type="EMBL" id="AJ279139">
    <property type="protein sequence ID" value="CAC21448.1"/>
    <property type="status" value="JOINED"/>
    <property type="molecule type" value="Genomic_DNA"/>
</dbReference>
<dbReference type="EMBL" id="AJ279140">
    <property type="protein sequence ID" value="CAC21448.1"/>
    <property type="status" value="JOINED"/>
    <property type="molecule type" value="Genomic_DNA"/>
</dbReference>
<dbReference type="EMBL" id="AJ279141">
    <property type="protein sequence ID" value="CAC21448.1"/>
    <property type="status" value="JOINED"/>
    <property type="molecule type" value="Genomic_DNA"/>
</dbReference>
<dbReference type="EMBL" id="AJ279142">
    <property type="protein sequence ID" value="CAC21448.1"/>
    <property type="status" value="JOINED"/>
    <property type="molecule type" value="Genomic_DNA"/>
</dbReference>
<dbReference type="EMBL" id="AJ279143">
    <property type="protein sequence ID" value="CAC21448.1"/>
    <property type="status" value="JOINED"/>
    <property type="molecule type" value="Genomic_DNA"/>
</dbReference>
<dbReference type="EMBL" id="AJ279144">
    <property type="protein sequence ID" value="CAC21448.1"/>
    <property type="status" value="JOINED"/>
    <property type="molecule type" value="Genomic_DNA"/>
</dbReference>
<dbReference type="EMBL" id="AJ279145">
    <property type="protein sequence ID" value="CAC21448.1"/>
    <property type="status" value="JOINED"/>
    <property type="molecule type" value="Genomic_DNA"/>
</dbReference>
<dbReference type="EMBL" id="AJ279146">
    <property type="protein sequence ID" value="CAC21448.1"/>
    <property type="status" value="JOINED"/>
    <property type="molecule type" value="Genomic_DNA"/>
</dbReference>
<dbReference type="EMBL" id="AJ279147">
    <property type="protein sequence ID" value="CAC21448.1"/>
    <property type="status" value="JOINED"/>
    <property type="molecule type" value="Genomic_DNA"/>
</dbReference>
<dbReference type="EMBL" id="AJ279148">
    <property type="protein sequence ID" value="CAC21448.1"/>
    <property type="status" value="JOINED"/>
    <property type="molecule type" value="Genomic_DNA"/>
</dbReference>
<dbReference type="EMBL" id="AJ279149">
    <property type="protein sequence ID" value="CAC21448.1"/>
    <property type="status" value="JOINED"/>
    <property type="molecule type" value="Genomic_DNA"/>
</dbReference>
<dbReference type="EMBL" id="AJ279150">
    <property type="protein sequence ID" value="CAC21448.1"/>
    <property type="status" value="JOINED"/>
    <property type="molecule type" value="Genomic_DNA"/>
</dbReference>
<dbReference type="EMBL" id="AB033067">
    <property type="protein sequence ID" value="BAA86555.1"/>
    <property type="status" value="ALT_INIT"/>
    <property type="molecule type" value="mRNA"/>
</dbReference>
<dbReference type="EMBL" id="AB051476">
    <property type="protein sequence ID" value="BAB21780.3"/>
    <property type="status" value="ALT_INIT"/>
    <property type="molecule type" value="mRNA"/>
</dbReference>
<dbReference type="EMBL" id="BX641011">
    <property type="protein sequence ID" value="CAE46010.1"/>
    <property type="molecule type" value="mRNA"/>
</dbReference>
<dbReference type="EMBL" id="CR749229">
    <property type="protein sequence ID" value="CAH18085.1"/>
    <property type="status" value="ALT_INIT"/>
    <property type="molecule type" value="mRNA"/>
</dbReference>
<dbReference type="EMBL" id="CR749289">
    <property type="protein sequence ID" value="CAH18144.1"/>
    <property type="molecule type" value="mRNA"/>
</dbReference>
<dbReference type="EMBL" id="AC138832">
    <property type="status" value="NOT_ANNOTATED_CDS"/>
    <property type="molecule type" value="Genomic_DNA"/>
</dbReference>
<dbReference type="EMBL" id="BC032146">
    <property type="protein sequence ID" value="AAH32146.1"/>
    <property type="status" value="ALT_SEQ"/>
    <property type="molecule type" value="mRNA"/>
</dbReference>
<dbReference type="EMBL" id="BC146792">
    <property type="protein sequence ID" value="AAI46793.1"/>
    <property type="molecule type" value="mRNA"/>
</dbReference>
<dbReference type="EMBL" id="AF176695">
    <property type="protein sequence ID" value="AAG09268.1"/>
    <property type="status" value="ALT_FRAME"/>
    <property type="molecule type" value="mRNA"/>
</dbReference>
<dbReference type="EMBL" id="AK057871">
    <property type="protein sequence ID" value="BAB71602.1"/>
    <property type="molecule type" value="mRNA"/>
</dbReference>
<dbReference type="CCDS" id="CCDS43328.1">
    <molecule id="A6H8Y1-1"/>
</dbReference>
<dbReference type="RefSeq" id="NP_060899.2">
    <molecule id="A6H8Y1-1"/>
    <property type="nucleotide sequence ID" value="NM_018429.3"/>
</dbReference>
<dbReference type="PDB" id="5N9G">
    <property type="method" value="X-ray"/>
    <property type="resolution" value="2.70 A"/>
    <property type="chains" value="C/H=241-396"/>
</dbReference>
<dbReference type="PDB" id="8ITY">
    <property type="method" value="EM"/>
    <property type="resolution" value="3.90 A"/>
    <property type="chains" value="W=1-2624"/>
</dbReference>
<dbReference type="PDB" id="8IUE">
    <property type="method" value="EM"/>
    <property type="resolution" value="4.10 A"/>
    <property type="chains" value="W=1-2624"/>
</dbReference>
<dbReference type="PDB" id="8IUH">
    <property type="method" value="EM"/>
    <property type="resolution" value="3.40 A"/>
    <property type="chains" value="W=1-2624"/>
</dbReference>
<dbReference type="PDB" id="9FSO">
    <property type="method" value="EM"/>
    <property type="resolution" value="3.28 A"/>
    <property type="chains" value="T=1-484"/>
</dbReference>
<dbReference type="PDB" id="9FSP">
    <property type="method" value="EM"/>
    <property type="resolution" value="3.39 A"/>
    <property type="chains" value="T=1-484"/>
</dbReference>
<dbReference type="PDB" id="9FSQ">
    <property type="method" value="EM"/>
    <property type="resolution" value="3.51 A"/>
    <property type="chains" value="T=1-484"/>
</dbReference>
<dbReference type="PDB" id="9FSR">
    <property type="method" value="EM"/>
    <property type="resolution" value="3.76 A"/>
    <property type="chains" value="T=1-484"/>
</dbReference>
<dbReference type="PDB" id="9FSS">
    <property type="method" value="EM"/>
    <property type="resolution" value="4.14 A"/>
    <property type="chains" value="T=1-484"/>
</dbReference>
<dbReference type="PDBsum" id="5N9G"/>
<dbReference type="PDBsum" id="8ITY"/>
<dbReference type="PDBsum" id="8IUE"/>
<dbReference type="PDBsum" id="8IUH"/>
<dbReference type="PDBsum" id="9FSO"/>
<dbReference type="PDBsum" id="9FSP"/>
<dbReference type="PDBsum" id="9FSQ"/>
<dbReference type="PDBsum" id="9FSR"/>
<dbReference type="PDBsum" id="9FSS"/>
<dbReference type="EMDB" id="EMD-35712"/>
<dbReference type="EMDB" id="EMD-35719"/>
<dbReference type="EMDB" id="EMD-35722"/>
<dbReference type="EMDB" id="EMD-50730"/>
<dbReference type="EMDB" id="EMD-50731"/>
<dbReference type="EMDB" id="EMD-50732"/>
<dbReference type="EMDB" id="EMD-50733"/>
<dbReference type="EMDB" id="EMD-50734"/>
<dbReference type="SMR" id="A6H8Y1"/>
<dbReference type="BioGRID" id="120924">
    <property type="interactions" value="66"/>
</dbReference>
<dbReference type="ComplexPortal" id="CPX-2396">
    <property type="entry name" value="General transcription factor TFIII3B complex, BRF1 variant"/>
</dbReference>
<dbReference type="ComplexPortal" id="CPX-2397">
    <property type="entry name" value="General transcription factor TFIII3B complex, BRF2 variant"/>
</dbReference>
<dbReference type="CORUM" id="A6H8Y1"/>
<dbReference type="DIP" id="DIP-62076N"/>
<dbReference type="FunCoup" id="A6H8Y1">
    <property type="interactions" value="1729"/>
</dbReference>
<dbReference type="IntAct" id="A6H8Y1">
    <property type="interactions" value="33"/>
</dbReference>
<dbReference type="MINT" id="A6H8Y1"/>
<dbReference type="STRING" id="9606.ENSP00000351575"/>
<dbReference type="GlyGen" id="A6H8Y1">
    <property type="glycosylation" value="5 sites, 1 O-linked glycan (5 sites)"/>
</dbReference>
<dbReference type="iPTMnet" id="A6H8Y1"/>
<dbReference type="PhosphoSitePlus" id="A6H8Y1"/>
<dbReference type="SwissPalm" id="A6H8Y1"/>
<dbReference type="BioMuta" id="BDP1"/>
<dbReference type="jPOST" id="A6H8Y1"/>
<dbReference type="MassIVE" id="A6H8Y1"/>
<dbReference type="PaxDb" id="9606-ENSP00000351575"/>
<dbReference type="PeptideAtlas" id="A6H8Y1"/>
<dbReference type="ProteomicsDB" id="777">
    <molecule id="A6H8Y1-1"/>
</dbReference>
<dbReference type="ProteomicsDB" id="778">
    <molecule id="A6H8Y1-2"/>
</dbReference>
<dbReference type="ProteomicsDB" id="779">
    <molecule id="A6H8Y1-3"/>
</dbReference>
<dbReference type="ProteomicsDB" id="780">
    <molecule id="A6H8Y1-4"/>
</dbReference>
<dbReference type="ProteomicsDB" id="781">
    <molecule id="A6H8Y1-5"/>
</dbReference>
<dbReference type="ProteomicsDB" id="782">
    <molecule id="A6H8Y1-6"/>
</dbReference>
<dbReference type="ProteomicsDB" id="783">
    <molecule id="A6H8Y1-7"/>
</dbReference>
<dbReference type="ProteomicsDB" id="784">
    <molecule id="A6H8Y1-8"/>
</dbReference>
<dbReference type="Pumba" id="A6H8Y1"/>
<dbReference type="Antibodypedia" id="24108">
    <property type="antibodies" value="21 antibodies from 7 providers"/>
</dbReference>
<dbReference type="DNASU" id="55814"/>
<dbReference type="Ensembl" id="ENST00000358731.9">
    <molecule id="A6H8Y1-1"/>
    <property type="protein sequence ID" value="ENSP00000351575.4"/>
    <property type="gene ID" value="ENSG00000145734.20"/>
</dbReference>
<dbReference type="Ensembl" id="ENST00000617085.4">
    <molecule id="A6H8Y1-1"/>
    <property type="protein sequence ID" value="ENSP00000482469.1"/>
    <property type="gene ID" value="ENSG00000273873.4"/>
</dbReference>
<dbReference type="GeneID" id="55814"/>
<dbReference type="KEGG" id="hsa:55814"/>
<dbReference type="MANE-Select" id="ENST00000358731.9">
    <property type="protein sequence ID" value="ENSP00000351575.4"/>
    <property type="RefSeq nucleotide sequence ID" value="NM_018429.3"/>
    <property type="RefSeq protein sequence ID" value="NP_060899.2"/>
</dbReference>
<dbReference type="UCSC" id="uc003kbp.2">
    <molecule id="A6H8Y1-1"/>
    <property type="organism name" value="human"/>
</dbReference>
<dbReference type="AGR" id="HGNC:13652"/>
<dbReference type="CTD" id="55814"/>
<dbReference type="DisGeNET" id="55814"/>
<dbReference type="GeneCards" id="BDP1"/>
<dbReference type="HGNC" id="HGNC:13652">
    <property type="gene designation" value="BDP1"/>
</dbReference>
<dbReference type="HPA" id="ENSG00000145734">
    <property type="expression patterns" value="Low tissue specificity"/>
</dbReference>
<dbReference type="MalaCards" id="BDP1"/>
<dbReference type="MIM" id="607012">
    <property type="type" value="gene"/>
</dbReference>
<dbReference type="MIM" id="618257">
    <property type="type" value="phenotype"/>
</dbReference>
<dbReference type="neXtProt" id="NX_A6H8Y1"/>
<dbReference type="OpenTargets" id="ENSG00000145734"/>
<dbReference type="Orphanet" id="90636">
    <property type="disease" value="Rare autosomal recessive non-syndromic sensorineural deafness type DFNB"/>
</dbReference>
<dbReference type="PharmGKB" id="PA25336"/>
<dbReference type="VEuPathDB" id="HostDB:ENSG00000145734"/>
<dbReference type="eggNOG" id="KOG2009">
    <property type="taxonomic scope" value="Eukaryota"/>
</dbReference>
<dbReference type="GeneTree" id="ENSGT00390000012762"/>
<dbReference type="HOGENOM" id="CLU_000736_0_0_1"/>
<dbReference type="InParanoid" id="A6H8Y1"/>
<dbReference type="OMA" id="KNDISPR"/>
<dbReference type="OrthoDB" id="272624at2759"/>
<dbReference type="PAN-GO" id="A6H8Y1">
    <property type="GO annotations" value="3 GO annotations based on evolutionary models"/>
</dbReference>
<dbReference type="PhylomeDB" id="A6H8Y1"/>
<dbReference type="TreeFam" id="TF328878"/>
<dbReference type="PathwayCommons" id="A6H8Y1"/>
<dbReference type="Reactome" id="R-HSA-749476">
    <property type="pathway name" value="RNA Polymerase III Abortive And Retractive Initiation"/>
</dbReference>
<dbReference type="Reactome" id="R-HSA-76061">
    <property type="pathway name" value="RNA Polymerase III Transcription Initiation From Type 1 Promoter"/>
</dbReference>
<dbReference type="Reactome" id="R-HSA-76066">
    <property type="pathway name" value="RNA Polymerase III Transcription Initiation From Type 2 Promoter"/>
</dbReference>
<dbReference type="Reactome" id="R-HSA-76071">
    <property type="pathway name" value="RNA Polymerase III Transcription Initiation From Type 3 Promoter"/>
</dbReference>
<dbReference type="SignaLink" id="A6H8Y1"/>
<dbReference type="SIGNOR" id="A6H8Y1"/>
<dbReference type="BioGRID-ORCS" id="55814">
    <property type="hits" value="484 hits in 1161 CRISPR screens"/>
</dbReference>
<dbReference type="ChiTaRS" id="BDP1">
    <property type="organism name" value="human"/>
</dbReference>
<dbReference type="GeneWiki" id="BDP1"/>
<dbReference type="GenomeRNAi" id="55814"/>
<dbReference type="Pharos" id="A6H8Y1">
    <property type="development level" value="Tbio"/>
</dbReference>
<dbReference type="PRO" id="PR:A6H8Y1"/>
<dbReference type="Proteomes" id="UP000005640">
    <property type="component" value="Chromosome 5"/>
</dbReference>
<dbReference type="RNAct" id="A6H8Y1">
    <property type="molecule type" value="protein"/>
</dbReference>
<dbReference type="Bgee" id="ENSG00000145734">
    <property type="expression patterns" value="Expressed in sural nerve and 103 other cell types or tissues"/>
</dbReference>
<dbReference type="ExpressionAtlas" id="A6H8Y1">
    <property type="expression patterns" value="baseline and differential"/>
</dbReference>
<dbReference type="GO" id="GO:0005654">
    <property type="term" value="C:nucleoplasm"/>
    <property type="evidence" value="ECO:0000314"/>
    <property type="project" value="HPA"/>
</dbReference>
<dbReference type="GO" id="GO:0000126">
    <property type="term" value="C:transcription factor TFIIIB complex"/>
    <property type="evidence" value="ECO:0000318"/>
    <property type="project" value="GO_Central"/>
</dbReference>
<dbReference type="GO" id="GO:0001156">
    <property type="term" value="F:TFIIIC-class transcription factor complex binding"/>
    <property type="evidence" value="ECO:0000318"/>
    <property type="project" value="GO_Central"/>
</dbReference>
<dbReference type="GO" id="GO:0070898">
    <property type="term" value="P:RNA polymerase III preinitiation complex assembly"/>
    <property type="evidence" value="ECO:0000318"/>
    <property type="project" value="GO_Central"/>
</dbReference>
<dbReference type="InterPro" id="IPR009057">
    <property type="entry name" value="Homeodomain-like_sf"/>
</dbReference>
<dbReference type="InterPro" id="IPR001005">
    <property type="entry name" value="SANT/Myb"/>
</dbReference>
<dbReference type="InterPro" id="IPR039467">
    <property type="entry name" value="TFIIIB_B''_Myb"/>
</dbReference>
<dbReference type="PANTHER" id="PTHR22929">
    <property type="entry name" value="RNA POLYMERASE III TRANSCRIPTION INITIATION FACTOR B"/>
    <property type="match status" value="1"/>
</dbReference>
<dbReference type="PANTHER" id="PTHR22929:SF0">
    <property type="entry name" value="TRANSCRIPTION FACTOR TFIIIB COMPONENT B'' HOMOLOG"/>
    <property type="match status" value="1"/>
</dbReference>
<dbReference type="Pfam" id="PF15963">
    <property type="entry name" value="Myb_DNA-bind_7"/>
    <property type="match status" value="1"/>
</dbReference>
<dbReference type="SMART" id="SM00717">
    <property type="entry name" value="SANT"/>
    <property type="match status" value="1"/>
</dbReference>
<dbReference type="SUPFAM" id="SSF46689">
    <property type="entry name" value="Homeodomain-like"/>
    <property type="match status" value="1"/>
</dbReference>
<sequence>MFRRARLSVKPNVRPGVGARGSTASNPQRGRESPRPPDPATDSASKPAEPTDVPTVDFGGAEPQEKAPRSSTEKTGGDNDVEESSRSSSTVSQRRKRISSTSSLVKSSVSVPSESHPLSTINQEAPQPTATSTKEKQPCSDRYRIYKAQKLREMLKEELRKEKKQWKNKYAINESQRPPDRSKMTMRDFIYYLPDNNPMTSSLEQEKKTEKPSTPVQTREQEGKSTPNAEDNEMEEETDDGPLLVPRVKVAEDGSIILDEESLTVEVLRTKGPCVVEENDPIFERGSTTTYSSFRKNYYSKPWSNKETDMFFLAISMVGTDFSMIGQLFPHRARIEIKNKFKREEKTNGWRIDKAFQEKRPFDFDFFAHLLQKVLAEEEKRKQKSVKNHSLKEKKSTKPRKNVKVKKVACEGVNNDPDESMSSRISDTERSQKDAQTVEEESLTLSREDAEQVALEVDLNQKKRRRKKQDGANELGVNNLLENATVQAGPSKGEKHKNKCQAIRPELKEGECSKEQMLSCTQNIDGIVGFASTEKVEKRTDPILSLSNQQDATSVATESSESSTSDLPSFEVGIRALCEVNNAEGSCIEERNVDLKNNSLEIDQTENVKPMLRGRFQRPKPNLSRAGKKSVLSQGKTESESKNSHSKTSVEKNHVEKDKMNTLDILRMETTERENPEAETVSVLGEKNCLQEGSQLKALRPVQVRGRLQKPKPNAGKAAERKEILISQEEIGANVEKNENESCADRDTPQHMEDQSRKDFEEEDVILQPEKNDSFQNVQPDEPKVLNECLSVQENNKANKLNQVPILRTRFQKPKPNIGRGTGRREISSKEEVLEKILVSGEMAAALRETVRLDTSPKEMVPAEINTKEMQSDLKETGRRAISPREKILDVIDDTIEMETGLKAMGREICLREKTPEVIDATEEIDKDLEEAGRREISPQKNGPEEVKPLGEVETDLKATGNESSPREKTPEVTDATEEIDKNLEETGRRKISPRENGPEEVKPVDEMETDLNATGRESSPREKTPEVIDATEEIDLEETEREVSPQENGLEEVKPLGEMETDLKATGRDSFPRGKTPEVIDAIEEIEIDLEETEREISPQENGLEEVKPLGEMQTDLKATGREISPREKTPEVIDATEEIDKDLEETGRREISPEENGPEEVKPVDEMETDLKTTGREGSSREKTREVIDAAEVIETDLEETEREISPQENGPEEVKPVGKMETDLKEIREEISQREKVLAEFSAIREKEIDLKETGKRDIPIMEKVSGKMAVVEEMEADLKETGKENFRERGSEEICVTEEKVAELKQTGKTDISPRENELEETSTSRQTDTHLMQSGSNDFSAVPSLDIQNISSEVLSMMHTPVEEKRNSEKEVSSHFSHFKISSQTHESDKTEVQGIQSPDVPEQFSDINLSKSLPQEQKPLEIKPAPFVRSRFKRPKPNLARAALKRETTESEKYIYEKKSETKKMETIVMQENNEQTDTLPSQHDEASLMISREKDTLGHRNEEAVILPCTQTERNLSPSNSCEPKEESQSAPVQKNDSVVSVGTNNVNTFQQEMKESVIQTARQVRGRLQRPRPNIRKTGQRQIVDKGEAKGIIKEGRTILPKDETEKKVLTVSNSQIETEIEVPSSAVPEHRMYENQSQVVLVENLHVNKTNETIRHENKPYVPSSAQMTRRKFQKAKPNLGRAHSKKEEPVLEKVTTDQSKEGKPEDHLLQKGASNTQLLLKEKAELLTSLEVSARKDCVGSKESALAKIDAELEEVGPSRRVGEETVGDNSPSSVVEEQYLNKLTSCPQPLNETSYSKIALDGKTTISSTSEYERNRGERRSHKKFKPNVTRGRGSKRVRGKTSKKEPRASKAMLVTLRASQEEDDDADDFESDYEEESYHLAPEEVNKAPVFVPVGLRSPEPVSAQIEETMEELEITVNVPDVGCIAVVEHELPNTDVTTEEMKQEENLSVPFEMTTSEHIQDEPGTNDGSTEAAITLLTMGDLVLQSEISSEQGDVGVCIIPHVHSKDKSHIPSSLDNVNHKIVHECQELSSPVITTSPASFEENKIVLEEQSSREEISLMEKVKENATPTRNTISKVTSNLRIRSRLAKPKPNLEKTLGTNRLDDYQEVSSLCVTKGAEMETQRETEKNASKATELENKNLGPVTTAENKDQSKLACVHGIKGTSISSEVNLTERNENQEESSQEVHMLSVAPVASSETGPCTLGLDRGLGENSVEEPQIKDSKGDSVLTLPVPEYTPTSIPEVQQENIINPQDLTVNLVANVPQDGEDEQAFILTLVEIPANAVEEFTDATAQFMPNPLLPAPILVKSVNTEERGDMSICLPATSVGQDAMGLSISGRDNSKKPPDNLDLVSRKRFQCRLDKNDHIPPAKKRSLTLRDDCQEYTTEVHSKELTNVFEETGESHKGQDIFLTSGSTLTTPEPQRQQVEAAFQSRGSRSPDACMDKNVPQLPQDEMIVSDKEERTDAAPKSQQMDSRTSSSKASLSRPGRRPLGFLSLICSKNSLESDEPMQVHSKKRLKPLIPGLRKKLKRSNPFNESQEKNRESSDLLPSPSVITTQSENISSSATQVSCDQPLLKEGYKSAQKRAPQGEATTVSEYFFNDIFIEVDETE</sequence>
<gene>
    <name type="primary">BDP1</name>
    <name type="synonym">KIAA1241</name>
    <name type="synonym">KIAA1689</name>
    <name type="synonym">TFNR</name>
</gene>
<proteinExistence type="evidence at protein level"/>
<protein>
    <recommendedName>
        <fullName>Transcription factor TFIIIB component B'' homolog</fullName>
    </recommendedName>
    <alternativeName>
        <fullName>Transcription factor IIIB 150</fullName>
        <shortName>TFIIIB150</shortName>
    </alternativeName>
    <alternativeName>
        <fullName>Transcription factor-like nuclear regulator</fullName>
    </alternativeName>
</protein>
<name>BDP1_HUMAN</name>
<keyword id="KW-0002">3D-structure</keyword>
<keyword id="KW-0010">Activator</keyword>
<keyword id="KW-0025">Alternative splicing</keyword>
<keyword id="KW-0175">Coiled coil</keyword>
<keyword id="KW-0209">Deafness</keyword>
<keyword id="KW-1010">Non-syndromic deafness</keyword>
<keyword id="KW-0539">Nucleus</keyword>
<keyword id="KW-0597">Phosphoprotein</keyword>
<keyword id="KW-1267">Proteomics identification</keyword>
<keyword id="KW-1185">Reference proteome</keyword>
<keyword id="KW-0677">Repeat</keyword>
<keyword id="KW-0804">Transcription</keyword>
<keyword id="KW-0805">Transcription regulation</keyword>